<accession>Q0ANQ3</accession>
<organism>
    <name type="scientific">Maricaulis maris (strain MCS10)</name>
    <name type="common">Caulobacter maris</name>
    <dbReference type="NCBI Taxonomy" id="394221"/>
    <lineage>
        <taxon>Bacteria</taxon>
        <taxon>Pseudomonadati</taxon>
        <taxon>Pseudomonadota</taxon>
        <taxon>Alphaproteobacteria</taxon>
        <taxon>Maricaulales</taxon>
        <taxon>Maricaulaceae</taxon>
        <taxon>Maricaulis</taxon>
    </lineage>
</organism>
<dbReference type="EMBL" id="CP000449">
    <property type="protein sequence ID" value="ABI66084.1"/>
    <property type="molecule type" value="Genomic_DNA"/>
</dbReference>
<dbReference type="RefSeq" id="WP_011643730.1">
    <property type="nucleotide sequence ID" value="NC_008347.1"/>
</dbReference>
<dbReference type="SMR" id="Q0ANQ3"/>
<dbReference type="STRING" id="394221.Mmar10_1792"/>
<dbReference type="KEGG" id="mmr:Mmar10_1792"/>
<dbReference type="eggNOG" id="COG0090">
    <property type="taxonomic scope" value="Bacteria"/>
</dbReference>
<dbReference type="HOGENOM" id="CLU_036235_2_1_5"/>
<dbReference type="OrthoDB" id="9778722at2"/>
<dbReference type="Proteomes" id="UP000001964">
    <property type="component" value="Chromosome"/>
</dbReference>
<dbReference type="GO" id="GO:0015934">
    <property type="term" value="C:large ribosomal subunit"/>
    <property type="evidence" value="ECO:0007669"/>
    <property type="project" value="InterPro"/>
</dbReference>
<dbReference type="GO" id="GO:0019843">
    <property type="term" value="F:rRNA binding"/>
    <property type="evidence" value="ECO:0007669"/>
    <property type="project" value="UniProtKB-UniRule"/>
</dbReference>
<dbReference type="GO" id="GO:0003735">
    <property type="term" value="F:structural constituent of ribosome"/>
    <property type="evidence" value="ECO:0007669"/>
    <property type="project" value="InterPro"/>
</dbReference>
<dbReference type="GO" id="GO:0016740">
    <property type="term" value="F:transferase activity"/>
    <property type="evidence" value="ECO:0007669"/>
    <property type="project" value="InterPro"/>
</dbReference>
<dbReference type="GO" id="GO:0002181">
    <property type="term" value="P:cytoplasmic translation"/>
    <property type="evidence" value="ECO:0007669"/>
    <property type="project" value="TreeGrafter"/>
</dbReference>
<dbReference type="FunFam" id="2.30.30.30:FF:000001">
    <property type="entry name" value="50S ribosomal protein L2"/>
    <property type="match status" value="1"/>
</dbReference>
<dbReference type="FunFam" id="2.40.50.140:FF:000003">
    <property type="entry name" value="50S ribosomal protein L2"/>
    <property type="match status" value="1"/>
</dbReference>
<dbReference type="FunFam" id="4.10.950.10:FF:000001">
    <property type="entry name" value="50S ribosomal protein L2"/>
    <property type="match status" value="1"/>
</dbReference>
<dbReference type="Gene3D" id="2.30.30.30">
    <property type="match status" value="1"/>
</dbReference>
<dbReference type="Gene3D" id="2.40.50.140">
    <property type="entry name" value="Nucleic acid-binding proteins"/>
    <property type="match status" value="1"/>
</dbReference>
<dbReference type="Gene3D" id="4.10.950.10">
    <property type="entry name" value="Ribosomal protein L2, domain 3"/>
    <property type="match status" value="1"/>
</dbReference>
<dbReference type="HAMAP" id="MF_01320_B">
    <property type="entry name" value="Ribosomal_uL2_B"/>
    <property type="match status" value="1"/>
</dbReference>
<dbReference type="InterPro" id="IPR012340">
    <property type="entry name" value="NA-bd_OB-fold"/>
</dbReference>
<dbReference type="InterPro" id="IPR014722">
    <property type="entry name" value="Rib_uL2_dom2"/>
</dbReference>
<dbReference type="InterPro" id="IPR002171">
    <property type="entry name" value="Ribosomal_uL2"/>
</dbReference>
<dbReference type="InterPro" id="IPR005880">
    <property type="entry name" value="Ribosomal_uL2_bac/org-type"/>
</dbReference>
<dbReference type="InterPro" id="IPR022669">
    <property type="entry name" value="Ribosomal_uL2_C"/>
</dbReference>
<dbReference type="InterPro" id="IPR022671">
    <property type="entry name" value="Ribosomal_uL2_CS"/>
</dbReference>
<dbReference type="InterPro" id="IPR014726">
    <property type="entry name" value="Ribosomal_uL2_dom3"/>
</dbReference>
<dbReference type="InterPro" id="IPR022666">
    <property type="entry name" value="Ribosomal_uL2_RNA-bd_dom"/>
</dbReference>
<dbReference type="InterPro" id="IPR008991">
    <property type="entry name" value="Translation_prot_SH3-like_sf"/>
</dbReference>
<dbReference type="NCBIfam" id="TIGR01171">
    <property type="entry name" value="rplB_bact"/>
    <property type="match status" value="1"/>
</dbReference>
<dbReference type="PANTHER" id="PTHR13691:SF5">
    <property type="entry name" value="LARGE RIBOSOMAL SUBUNIT PROTEIN UL2M"/>
    <property type="match status" value="1"/>
</dbReference>
<dbReference type="PANTHER" id="PTHR13691">
    <property type="entry name" value="RIBOSOMAL PROTEIN L2"/>
    <property type="match status" value="1"/>
</dbReference>
<dbReference type="Pfam" id="PF00181">
    <property type="entry name" value="Ribosomal_L2"/>
    <property type="match status" value="1"/>
</dbReference>
<dbReference type="Pfam" id="PF03947">
    <property type="entry name" value="Ribosomal_L2_C"/>
    <property type="match status" value="1"/>
</dbReference>
<dbReference type="PIRSF" id="PIRSF002158">
    <property type="entry name" value="Ribosomal_L2"/>
    <property type="match status" value="1"/>
</dbReference>
<dbReference type="SMART" id="SM01383">
    <property type="entry name" value="Ribosomal_L2"/>
    <property type="match status" value="1"/>
</dbReference>
<dbReference type="SMART" id="SM01382">
    <property type="entry name" value="Ribosomal_L2_C"/>
    <property type="match status" value="1"/>
</dbReference>
<dbReference type="SUPFAM" id="SSF50249">
    <property type="entry name" value="Nucleic acid-binding proteins"/>
    <property type="match status" value="1"/>
</dbReference>
<dbReference type="SUPFAM" id="SSF50104">
    <property type="entry name" value="Translation proteins SH3-like domain"/>
    <property type="match status" value="1"/>
</dbReference>
<dbReference type="PROSITE" id="PS00467">
    <property type="entry name" value="RIBOSOMAL_L2"/>
    <property type="match status" value="1"/>
</dbReference>
<keyword id="KW-1185">Reference proteome</keyword>
<keyword id="KW-0687">Ribonucleoprotein</keyword>
<keyword id="KW-0689">Ribosomal protein</keyword>
<keyword id="KW-0694">RNA-binding</keyword>
<keyword id="KW-0699">rRNA-binding</keyword>
<name>RL2_MARMM</name>
<sequence length="278" mass="30546">MALKTFKPTSPGRRALVLVDRSALHKGRPEKTLVEGLTKKGGRNNMGRITARRRGGGAKRLYRLVDFKRRKWDMPATVERLEYDPNRTAFIALIKYEDGEKAYILAPQRLSEGDTVIASAKCDVKPGNAMPLKAVPVGTILHNVEMKPEKGGQIARSAGAYVQLVGRDAGYAQIRLASGELRMVSDKCMATVGAVSNPDHLNINLGKAGRNRHLGKRPSVRGVVMNPVDHPHGGGEGRTSGGRHPVTPWGKPTKGAKTRKNKSTDKFIIRSRHERKKR</sequence>
<feature type="chain" id="PRO_0000309951" description="Large ribosomal subunit protein uL2">
    <location>
        <begin position="1"/>
        <end position="278"/>
    </location>
</feature>
<feature type="region of interest" description="Disordered" evidence="2">
    <location>
        <begin position="222"/>
        <end position="278"/>
    </location>
</feature>
<feature type="compositionally biased region" description="Basic residues" evidence="2">
    <location>
        <begin position="269"/>
        <end position="278"/>
    </location>
</feature>
<proteinExistence type="inferred from homology"/>
<gene>
    <name evidence="1" type="primary">rplB</name>
    <name type="ordered locus">Mmar10_1792</name>
</gene>
<reference key="1">
    <citation type="submission" date="2006-08" db="EMBL/GenBank/DDBJ databases">
        <title>Complete sequence of Maricaulis maris MCS10.</title>
        <authorList>
            <consortium name="US DOE Joint Genome Institute"/>
            <person name="Copeland A."/>
            <person name="Lucas S."/>
            <person name="Lapidus A."/>
            <person name="Barry K."/>
            <person name="Detter J.C."/>
            <person name="Glavina del Rio T."/>
            <person name="Hammon N."/>
            <person name="Israni S."/>
            <person name="Dalin E."/>
            <person name="Tice H."/>
            <person name="Pitluck S."/>
            <person name="Saunders E."/>
            <person name="Brettin T."/>
            <person name="Bruce D."/>
            <person name="Han C."/>
            <person name="Tapia R."/>
            <person name="Gilna P."/>
            <person name="Schmutz J."/>
            <person name="Larimer F."/>
            <person name="Land M."/>
            <person name="Hauser L."/>
            <person name="Kyrpides N."/>
            <person name="Mikhailova N."/>
            <person name="Viollier P."/>
            <person name="Stephens C."/>
            <person name="Richardson P."/>
        </authorList>
    </citation>
    <scope>NUCLEOTIDE SEQUENCE [LARGE SCALE GENOMIC DNA]</scope>
    <source>
        <strain>MCS10</strain>
    </source>
</reference>
<evidence type="ECO:0000255" key="1">
    <source>
        <dbReference type="HAMAP-Rule" id="MF_01320"/>
    </source>
</evidence>
<evidence type="ECO:0000256" key="2">
    <source>
        <dbReference type="SAM" id="MobiDB-lite"/>
    </source>
</evidence>
<evidence type="ECO:0000305" key="3"/>
<comment type="function">
    <text evidence="1">One of the primary rRNA binding proteins. Required for association of the 30S and 50S subunits to form the 70S ribosome, for tRNA binding and peptide bond formation. It has been suggested to have peptidyltransferase activity; this is somewhat controversial. Makes several contacts with the 16S rRNA in the 70S ribosome.</text>
</comment>
<comment type="subunit">
    <text evidence="1">Part of the 50S ribosomal subunit. Forms a bridge to the 30S subunit in the 70S ribosome.</text>
</comment>
<comment type="similarity">
    <text evidence="1">Belongs to the universal ribosomal protein uL2 family.</text>
</comment>
<protein>
    <recommendedName>
        <fullName evidence="1">Large ribosomal subunit protein uL2</fullName>
    </recommendedName>
    <alternativeName>
        <fullName evidence="3">50S ribosomal protein L2</fullName>
    </alternativeName>
</protein>